<accession>A6YGC8</accession>
<sequence>MIQPQTYLNVADNSGARKLMCIRILGGRQKQYGKIGDVIIAVVKDALPNMPLKKSEIVRAVIVRTRKGVNRNNGTSIRFDENAAVIINKEGNPRGTRIFGPVARELRERNFTKLVSLAPEVL</sequence>
<comment type="function">
    <text evidence="1">Binds to 23S rRNA.</text>
</comment>
<comment type="subunit">
    <text evidence="1">Part of the 50S ribosomal subunit.</text>
</comment>
<comment type="subcellular location">
    <subcellularLocation>
        <location>Plastid</location>
        <location>Chloroplast</location>
    </subcellularLocation>
</comment>
<comment type="similarity">
    <text evidence="1">Belongs to the universal ribosomal protein uL14 family.</text>
</comment>
<name>RK14_PLETE</name>
<feature type="chain" id="PRO_0000355887" description="Large ribosomal subunit protein uL14c">
    <location>
        <begin position="1"/>
        <end position="122"/>
    </location>
</feature>
<dbReference type="EMBL" id="EF506945">
    <property type="protein sequence ID" value="ABO69341.1"/>
    <property type="molecule type" value="Genomic_DNA"/>
</dbReference>
<dbReference type="RefSeq" id="YP_001382205.1">
    <property type="nucleotide sequence ID" value="NC_009681.1"/>
</dbReference>
<dbReference type="SMR" id="A6YGC8"/>
<dbReference type="GeneID" id="5383773"/>
<dbReference type="GO" id="GO:0009507">
    <property type="term" value="C:chloroplast"/>
    <property type="evidence" value="ECO:0007669"/>
    <property type="project" value="UniProtKB-SubCell"/>
</dbReference>
<dbReference type="GO" id="GO:0022625">
    <property type="term" value="C:cytosolic large ribosomal subunit"/>
    <property type="evidence" value="ECO:0007669"/>
    <property type="project" value="TreeGrafter"/>
</dbReference>
<dbReference type="GO" id="GO:0070180">
    <property type="term" value="F:large ribosomal subunit rRNA binding"/>
    <property type="evidence" value="ECO:0007669"/>
    <property type="project" value="TreeGrafter"/>
</dbReference>
<dbReference type="GO" id="GO:0003735">
    <property type="term" value="F:structural constituent of ribosome"/>
    <property type="evidence" value="ECO:0007669"/>
    <property type="project" value="InterPro"/>
</dbReference>
<dbReference type="GO" id="GO:0006412">
    <property type="term" value="P:translation"/>
    <property type="evidence" value="ECO:0007669"/>
    <property type="project" value="UniProtKB-UniRule"/>
</dbReference>
<dbReference type="CDD" id="cd00337">
    <property type="entry name" value="Ribosomal_uL14"/>
    <property type="match status" value="1"/>
</dbReference>
<dbReference type="FunFam" id="2.40.150.20:FF:000001">
    <property type="entry name" value="50S ribosomal protein L14"/>
    <property type="match status" value="1"/>
</dbReference>
<dbReference type="Gene3D" id="2.40.150.20">
    <property type="entry name" value="Ribosomal protein L14"/>
    <property type="match status" value="1"/>
</dbReference>
<dbReference type="HAMAP" id="MF_01367">
    <property type="entry name" value="Ribosomal_uL14"/>
    <property type="match status" value="1"/>
</dbReference>
<dbReference type="InterPro" id="IPR000218">
    <property type="entry name" value="Ribosomal_uL14"/>
</dbReference>
<dbReference type="InterPro" id="IPR005745">
    <property type="entry name" value="Ribosomal_uL14_bac-type"/>
</dbReference>
<dbReference type="InterPro" id="IPR019972">
    <property type="entry name" value="Ribosomal_uL14_CS"/>
</dbReference>
<dbReference type="InterPro" id="IPR036853">
    <property type="entry name" value="Ribosomal_uL14_sf"/>
</dbReference>
<dbReference type="NCBIfam" id="TIGR01067">
    <property type="entry name" value="rplN_bact"/>
    <property type="match status" value="1"/>
</dbReference>
<dbReference type="PANTHER" id="PTHR11761">
    <property type="entry name" value="50S/60S RIBOSOMAL PROTEIN L14/L23"/>
    <property type="match status" value="1"/>
</dbReference>
<dbReference type="PANTHER" id="PTHR11761:SF3">
    <property type="entry name" value="LARGE RIBOSOMAL SUBUNIT PROTEIN UL14M"/>
    <property type="match status" value="1"/>
</dbReference>
<dbReference type="Pfam" id="PF00238">
    <property type="entry name" value="Ribosomal_L14"/>
    <property type="match status" value="1"/>
</dbReference>
<dbReference type="SMART" id="SM01374">
    <property type="entry name" value="Ribosomal_L14"/>
    <property type="match status" value="1"/>
</dbReference>
<dbReference type="SUPFAM" id="SSF50193">
    <property type="entry name" value="Ribosomal protein L14"/>
    <property type="match status" value="1"/>
</dbReference>
<dbReference type="PROSITE" id="PS00049">
    <property type="entry name" value="RIBOSOMAL_L14"/>
    <property type="match status" value="1"/>
</dbReference>
<gene>
    <name evidence="1" type="primary">rpl14</name>
</gene>
<geneLocation type="chloroplast"/>
<proteinExistence type="inferred from homology"/>
<protein>
    <recommendedName>
        <fullName evidence="1">Large ribosomal subunit protein uL14c</fullName>
    </recommendedName>
    <alternativeName>
        <fullName evidence="2">50S ribosomal protein L14, chloroplastic</fullName>
    </alternativeName>
</protein>
<organism>
    <name type="scientific">Pleurastrum terricola</name>
    <name type="common">Filamentous green alga</name>
    <name type="synonym">Leptosira terrestris</name>
    <dbReference type="NCBI Taxonomy" id="34116"/>
    <lineage>
        <taxon>Eukaryota</taxon>
        <taxon>Viridiplantae</taxon>
        <taxon>Chlorophyta</taxon>
        <taxon>core chlorophytes</taxon>
        <taxon>Chlorophyceae</taxon>
        <taxon>CS clade</taxon>
        <taxon>Chlamydomonadales</taxon>
        <taxon>Pleurastraceae</taxon>
        <taxon>Pleurastrum</taxon>
    </lineage>
</organism>
<keyword id="KW-0150">Chloroplast</keyword>
<keyword id="KW-0934">Plastid</keyword>
<keyword id="KW-0687">Ribonucleoprotein</keyword>
<keyword id="KW-0689">Ribosomal protein</keyword>
<keyword id="KW-0694">RNA-binding</keyword>
<keyword id="KW-0699">rRNA-binding</keyword>
<reference key="1">
    <citation type="journal article" date="2007" name="BMC Genomics">
        <title>The chloroplast genome sequence of the green alga Leptosira terrestris: multiple losses of the inverted repeat and extensive genome rearrangements within the Trebouxiophyceae.</title>
        <authorList>
            <person name="de Cambiaire J.-C."/>
            <person name="Otis C."/>
            <person name="Turmel M."/>
            <person name="Lemieux C."/>
        </authorList>
    </citation>
    <scope>NUCLEOTIDE SEQUENCE [LARGE SCALE GENOMIC DNA]</scope>
    <source>
        <strain>CCAP 463/2 / UTEX 333</strain>
    </source>
</reference>
<evidence type="ECO:0000255" key="1">
    <source>
        <dbReference type="HAMAP-Rule" id="MF_01367"/>
    </source>
</evidence>
<evidence type="ECO:0000305" key="2"/>